<gene>
    <name type="primary">slc30a7</name>
    <name type="synonym">znt7</name>
    <name type="ORF">si:ch211-190n7.2</name>
    <name type="ORF">si:dkey-6p9.3</name>
</gene>
<sequence>MLPLSIKDDEYKPAKFNLVVKLSGWFRSILADKTSRNLFFFLCLNLSFAFVELLYGIWSNSLGLISDSFHMFFDCTALLAGLAASVISRWRSNDSFSYGYVRAEVLAGFVNGLFLIFTAFFIFSEGVERALEPPDVHHDRLLPVSIAGLLVNLVGIFVFQHGGHGHSHGGDDHGHSHSLFNGSAAHGHSHGGHGHSHGGHGHSHESKHGHDHGHSHGGHGHSHDDQHCHDDHTLTPGKGSSKQILQGVFLHIVADTLGSVGVIISAILMQKYDLMIADPICSMLIALLIGVSVVPLLRESIGILMQRTPPSLDHALPECYQRVQQLQGVYNLQEPHFWTLCTDVYIGTLKLLVAPDADSRWILSQTHNIFTQVGVRQLYVQIEVAAM</sequence>
<keyword id="KW-0968">Cytoplasmic vesicle</keyword>
<keyword id="KW-0333">Golgi apparatus</keyword>
<keyword id="KW-0406">Ion transport</keyword>
<keyword id="KW-0472">Membrane</keyword>
<keyword id="KW-0496">Mitochondrion</keyword>
<keyword id="KW-1185">Reference proteome</keyword>
<keyword id="KW-0703">Sarcoplasmic reticulum</keyword>
<keyword id="KW-0812">Transmembrane</keyword>
<keyword id="KW-1133">Transmembrane helix</keyword>
<keyword id="KW-0813">Transport</keyword>
<keyword id="KW-0862">Zinc</keyword>
<keyword id="KW-0864">Zinc transport</keyword>
<organism>
    <name type="scientific">Danio rerio</name>
    <name type="common">Zebrafish</name>
    <name type="synonym">Brachydanio rerio</name>
    <dbReference type="NCBI Taxonomy" id="7955"/>
    <lineage>
        <taxon>Eukaryota</taxon>
        <taxon>Metazoa</taxon>
        <taxon>Chordata</taxon>
        <taxon>Craniata</taxon>
        <taxon>Vertebrata</taxon>
        <taxon>Euteleostomi</taxon>
        <taxon>Actinopterygii</taxon>
        <taxon>Neopterygii</taxon>
        <taxon>Teleostei</taxon>
        <taxon>Ostariophysi</taxon>
        <taxon>Cypriniformes</taxon>
        <taxon>Danionidae</taxon>
        <taxon>Danioninae</taxon>
        <taxon>Danio</taxon>
    </lineage>
</organism>
<protein>
    <recommendedName>
        <fullName evidence="6">Zinc transporter 7</fullName>
    </recommendedName>
    <alternativeName>
        <fullName>Solute carrier family 30 member 7</fullName>
    </alternativeName>
</protein>
<evidence type="ECO:0000250" key="1">
    <source>
        <dbReference type="UniProtKB" id="Q5BJM8"/>
    </source>
</evidence>
<evidence type="ECO:0000250" key="2">
    <source>
        <dbReference type="UniProtKB" id="Q8NEW0"/>
    </source>
</evidence>
<evidence type="ECO:0000250" key="3">
    <source>
        <dbReference type="UniProtKB" id="Q9JKN1"/>
    </source>
</evidence>
<evidence type="ECO:0000255" key="4"/>
<evidence type="ECO:0000256" key="5">
    <source>
        <dbReference type="SAM" id="MobiDB-lite"/>
    </source>
</evidence>
<evidence type="ECO:0000305" key="6"/>
<accession>A5PMX1</accession>
<accession>A8KBT2</accession>
<accession>Q1LVV4</accession>
<accession>Q803X8</accession>
<proteinExistence type="evidence at transcript level"/>
<name>ZNT7_DANRE</name>
<feature type="chain" id="PRO_0000314303" description="Zinc transporter 7">
    <location>
        <begin position="1"/>
        <end position="387"/>
    </location>
</feature>
<feature type="topological domain" description="Cytoplasmic" evidence="6">
    <location>
        <begin position="1"/>
        <end position="37"/>
    </location>
</feature>
<feature type="transmembrane region" description="Helical" evidence="4">
    <location>
        <begin position="38"/>
        <end position="58"/>
    </location>
</feature>
<feature type="topological domain" description="Lumenal" evidence="6">
    <location>
        <begin position="59"/>
        <end position="67"/>
    </location>
</feature>
<feature type="transmembrane region" description="Helical" evidence="4">
    <location>
        <begin position="68"/>
        <end position="88"/>
    </location>
</feature>
<feature type="topological domain" description="Cytoplasmic" evidence="6">
    <location>
        <begin position="89"/>
        <end position="102"/>
    </location>
</feature>
<feature type="transmembrane region" description="Helical" evidence="4">
    <location>
        <begin position="103"/>
        <end position="123"/>
    </location>
</feature>
<feature type="topological domain" description="Lumenal" evidence="6">
    <location>
        <begin position="124"/>
        <end position="140"/>
    </location>
</feature>
<feature type="transmembrane region" description="Helical" evidence="4">
    <location>
        <begin position="141"/>
        <end position="161"/>
    </location>
</feature>
<feature type="topological domain" description="Cytoplasmic" evidence="6">
    <location>
        <begin position="162"/>
        <end position="247"/>
    </location>
</feature>
<feature type="transmembrane region" description="Helical" evidence="4">
    <location>
        <begin position="248"/>
        <end position="268"/>
    </location>
</feature>
<feature type="topological domain" description="Lumenal" evidence="6">
    <location>
        <begin position="269"/>
        <end position="273"/>
    </location>
</feature>
<feature type="transmembrane region" description="Helical" evidence="4">
    <location>
        <begin position="274"/>
        <end position="294"/>
    </location>
</feature>
<feature type="topological domain" description="Cytoplasmic" evidence="6">
    <location>
        <begin position="295"/>
        <end position="387"/>
    </location>
</feature>
<feature type="region of interest" description="His-rich loop">
    <location>
        <begin position="161"/>
        <end position="232"/>
    </location>
</feature>
<feature type="region of interest" description="Disordered" evidence="5">
    <location>
        <begin position="167"/>
        <end position="237"/>
    </location>
</feature>
<feature type="compositionally biased region" description="Basic residues" evidence="5">
    <location>
        <begin position="187"/>
        <end position="201"/>
    </location>
</feature>
<feature type="compositionally biased region" description="Basic and acidic residues" evidence="5">
    <location>
        <begin position="202"/>
        <end position="214"/>
    </location>
</feature>
<feature type="compositionally biased region" description="Basic and acidic residues" evidence="5">
    <location>
        <begin position="221"/>
        <end position="233"/>
    </location>
</feature>
<feature type="sequence conflict" description="In Ref. 2; AAI54235." evidence="6" ref="2">
    <original>S</original>
    <variation>G</variation>
    <location>
        <position position="59"/>
    </location>
</feature>
<feature type="sequence conflict" description="In Ref. 2; AAH44151." evidence="6" ref="2">
    <original>L</original>
    <variation>Q</variation>
    <location>
        <position position="79"/>
    </location>
</feature>
<reference key="1">
    <citation type="journal article" date="2013" name="Nature">
        <title>The zebrafish reference genome sequence and its relationship to the human genome.</title>
        <authorList>
            <person name="Howe K."/>
            <person name="Clark M.D."/>
            <person name="Torroja C.F."/>
            <person name="Torrance J."/>
            <person name="Berthelot C."/>
            <person name="Muffato M."/>
            <person name="Collins J.E."/>
            <person name="Humphray S."/>
            <person name="McLaren K."/>
            <person name="Matthews L."/>
            <person name="McLaren S."/>
            <person name="Sealy I."/>
            <person name="Caccamo M."/>
            <person name="Churcher C."/>
            <person name="Scott C."/>
            <person name="Barrett J.C."/>
            <person name="Koch R."/>
            <person name="Rauch G.J."/>
            <person name="White S."/>
            <person name="Chow W."/>
            <person name="Kilian B."/>
            <person name="Quintais L.T."/>
            <person name="Guerra-Assuncao J.A."/>
            <person name="Zhou Y."/>
            <person name="Gu Y."/>
            <person name="Yen J."/>
            <person name="Vogel J.H."/>
            <person name="Eyre T."/>
            <person name="Redmond S."/>
            <person name="Banerjee R."/>
            <person name="Chi J."/>
            <person name="Fu B."/>
            <person name="Langley E."/>
            <person name="Maguire S.F."/>
            <person name="Laird G.K."/>
            <person name="Lloyd D."/>
            <person name="Kenyon E."/>
            <person name="Donaldson S."/>
            <person name="Sehra H."/>
            <person name="Almeida-King J."/>
            <person name="Loveland J."/>
            <person name="Trevanion S."/>
            <person name="Jones M."/>
            <person name="Quail M."/>
            <person name="Willey D."/>
            <person name="Hunt A."/>
            <person name="Burton J."/>
            <person name="Sims S."/>
            <person name="McLay K."/>
            <person name="Plumb B."/>
            <person name="Davis J."/>
            <person name="Clee C."/>
            <person name="Oliver K."/>
            <person name="Clark R."/>
            <person name="Riddle C."/>
            <person name="Elliot D."/>
            <person name="Threadgold G."/>
            <person name="Harden G."/>
            <person name="Ware D."/>
            <person name="Begum S."/>
            <person name="Mortimore B."/>
            <person name="Kerry G."/>
            <person name="Heath P."/>
            <person name="Phillimore B."/>
            <person name="Tracey A."/>
            <person name="Corby N."/>
            <person name="Dunn M."/>
            <person name="Johnson C."/>
            <person name="Wood J."/>
            <person name="Clark S."/>
            <person name="Pelan S."/>
            <person name="Griffiths G."/>
            <person name="Smith M."/>
            <person name="Glithero R."/>
            <person name="Howden P."/>
            <person name="Barker N."/>
            <person name="Lloyd C."/>
            <person name="Stevens C."/>
            <person name="Harley J."/>
            <person name="Holt K."/>
            <person name="Panagiotidis G."/>
            <person name="Lovell J."/>
            <person name="Beasley H."/>
            <person name="Henderson C."/>
            <person name="Gordon D."/>
            <person name="Auger K."/>
            <person name="Wright D."/>
            <person name="Collins J."/>
            <person name="Raisen C."/>
            <person name="Dyer L."/>
            <person name="Leung K."/>
            <person name="Robertson L."/>
            <person name="Ambridge K."/>
            <person name="Leongamornlert D."/>
            <person name="McGuire S."/>
            <person name="Gilderthorp R."/>
            <person name="Griffiths C."/>
            <person name="Manthravadi D."/>
            <person name="Nichol S."/>
            <person name="Barker G."/>
            <person name="Whitehead S."/>
            <person name="Kay M."/>
            <person name="Brown J."/>
            <person name="Murnane C."/>
            <person name="Gray E."/>
            <person name="Humphries M."/>
            <person name="Sycamore N."/>
            <person name="Barker D."/>
            <person name="Saunders D."/>
            <person name="Wallis J."/>
            <person name="Babbage A."/>
            <person name="Hammond S."/>
            <person name="Mashreghi-Mohammadi M."/>
            <person name="Barr L."/>
            <person name="Martin S."/>
            <person name="Wray P."/>
            <person name="Ellington A."/>
            <person name="Matthews N."/>
            <person name="Ellwood M."/>
            <person name="Woodmansey R."/>
            <person name="Clark G."/>
            <person name="Cooper J."/>
            <person name="Tromans A."/>
            <person name="Grafham D."/>
            <person name="Skuce C."/>
            <person name="Pandian R."/>
            <person name="Andrews R."/>
            <person name="Harrison E."/>
            <person name="Kimberley A."/>
            <person name="Garnett J."/>
            <person name="Fosker N."/>
            <person name="Hall R."/>
            <person name="Garner P."/>
            <person name="Kelly D."/>
            <person name="Bird C."/>
            <person name="Palmer S."/>
            <person name="Gehring I."/>
            <person name="Berger A."/>
            <person name="Dooley C.M."/>
            <person name="Ersan-Urun Z."/>
            <person name="Eser C."/>
            <person name="Geiger H."/>
            <person name="Geisler M."/>
            <person name="Karotki L."/>
            <person name="Kirn A."/>
            <person name="Konantz J."/>
            <person name="Konantz M."/>
            <person name="Oberlander M."/>
            <person name="Rudolph-Geiger S."/>
            <person name="Teucke M."/>
            <person name="Lanz C."/>
            <person name="Raddatz G."/>
            <person name="Osoegawa K."/>
            <person name="Zhu B."/>
            <person name="Rapp A."/>
            <person name="Widaa S."/>
            <person name="Langford C."/>
            <person name="Yang F."/>
            <person name="Schuster S.C."/>
            <person name="Carter N.P."/>
            <person name="Harrow J."/>
            <person name="Ning Z."/>
            <person name="Herrero J."/>
            <person name="Searle S.M."/>
            <person name="Enright A."/>
            <person name="Geisler R."/>
            <person name="Plasterk R.H."/>
            <person name="Lee C."/>
            <person name="Westerfield M."/>
            <person name="de Jong P.J."/>
            <person name="Zon L.I."/>
            <person name="Postlethwait J.H."/>
            <person name="Nusslein-Volhard C."/>
            <person name="Hubbard T.J."/>
            <person name="Roest Crollius H."/>
            <person name="Rogers J."/>
            <person name="Stemple D.L."/>
        </authorList>
    </citation>
    <scope>NUCLEOTIDE SEQUENCE [LARGE SCALE GENOMIC DNA]</scope>
    <source>
        <strain>Tuebingen</strain>
    </source>
</reference>
<reference key="2">
    <citation type="submission" date="2007-10" db="EMBL/GenBank/DDBJ databases">
        <authorList>
            <consortium name="NIH - Zebrafish Gene Collection (ZGC) project"/>
        </authorList>
    </citation>
    <scope>NUCLEOTIDE SEQUENCE [LARGE SCALE MRNA]</scope>
    <source>
        <strain>AB</strain>
        <tissue>Ovary</tissue>
    </source>
</reference>
<comment type="function">
    <text evidence="2">Zinc ion transporter mediating zinc entry from the cytosol into the lumen of organelles along the secretory pathway. By contributing to zinc ion homeostasis within the early secretory pathway, regulates the activation and folding of enzymes like alkaline phosphatases.</text>
</comment>
<comment type="catalytic activity">
    <reaction evidence="2">
        <text>Zn(2+)(in) = Zn(2+)(out)</text>
        <dbReference type="Rhea" id="RHEA:29351"/>
        <dbReference type="ChEBI" id="CHEBI:29105"/>
    </reaction>
</comment>
<comment type="subunit">
    <text evidence="2">Homooligomer.</text>
</comment>
<comment type="subcellular location">
    <subcellularLocation>
        <location evidence="2">Golgi apparatus membrane</location>
        <topology evidence="4">Multi-pass membrane protein</topology>
    </subcellularLocation>
    <subcellularLocation>
        <location evidence="3">Cytoplasmic vesicle</location>
    </subcellularLocation>
    <subcellularLocation>
        <location evidence="3">Golgi apparatus</location>
        <location evidence="3">trans-Golgi network</location>
    </subcellularLocation>
    <subcellularLocation>
        <location evidence="1">Sarcoplasmic reticulum</location>
    </subcellularLocation>
    <subcellularLocation>
        <location evidence="1">Mitochondrion</location>
    </subcellularLocation>
</comment>
<comment type="similarity">
    <text evidence="6">Belongs to the cation diffusion facilitator (CDF) transporter (TC 2.A.4) family. SLC30A subfamily.</text>
</comment>
<dbReference type="EMBL" id="BX908733">
    <property type="protein sequence ID" value="CAN88650.1"/>
    <property type="molecule type" value="Genomic_DNA"/>
</dbReference>
<dbReference type="EMBL" id="BC044151">
    <property type="protein sequence ID" value="AAH44151.1"/>
    <property type="molecule type" value="mRNA"/>
</dbReference>
<dbReference type="EMBL" id="BC154234">
    <property type="protein sequence ID" value="AAI54235.1"/>
    <property type="molecule type" value="mRNA"/>
</dbReference>
<dbReference type="RefSeq" id="NP_001093556.1">
    <property type="nucleotide sequence ID" value="NM_001100086.1"/>
</dbReference>
<dbReference type="SMR" id="A5PMX1"/>
<dbReference type="FunCoup" id="A5PMX1">
    <property type="interactions" value="1358"/>
</dbReference>
<dbReference type="STRING" id="7955.ENSDARP00000005251"/>
<dbReference type="PaxDb" id="7955-ENSDARP00000005251"/>
<dbReference type="PeptideAtlas" id="A5PMX1"/>
<dbReference type="Ensembl" id="ENSDART00000009464">
    <property type="protein sequence ID" value="ENSDARP00000005251"/>
    <property type="gene ID" value="ENSDARG00000019998"/>
</dbReference>
<dbReference type="GeneID" id="327439"/>
<dbReference type="KEGG" id="dre:327439"/>
<dbReference type="AGR" id="ZFIN:ZDB-GENE-030131-5650"/>
<dbReference type="CTD" id="148867"/>
<dbReference type="ZFIN" id="ZDB-GENE-030131-5650">
    <property type="gene designation" value="slc30a7"/>
</dbReference>
<dbReference type="eggNOG" id="KOG1484">
    <property type="taxonomic scope" value="Eukaryota"/>
</dbReference>
<dbReference type="HOGENOM" id="CLU_013430_0_3_1"/>
<dbReference type="InParanoid" id="A5PMX1"/>
<dbReference type="OMA" id="KWRANER"/>
<dbReference type="OrthoDB" id="78669at2759"/>
<dbReference type="PhylomeDB" id="A5PMX1"/>
<dbReference type="TreeFam" id="TF315217"/>
<dbReference type="PRO" id="PR:A5PMX1"/>
<dbReference type="Proteomes" id="UP000000437">
    <property type="component" value="Alternate scaffold 22"/>
</dbReference>
<dbReference type="Proteomes" id="UP000000437">
    <property type="component" value="Chromosome 22"/>
</dbReference>
<dbReference type="Bgee" id="ENSDARG00000019998">
    <property type="expression patterns" value="Expressed in liver and 27 other cell types or tissues"/>
</dbReference>
<dbReference type="GO" id="GO:0031410">
    <property type="term" value="C:cytoplasmic vesicle"/>
    <property type="evidence" value="ECO:0000318"/>
    <property type="project" value="GO_Central"/>
</dbReference>
<dbReference type="GO" id="GO:0005794">
    <property type="term" value="C:Golgi apparatus"/>
    <property type="evidence" value="ECO:0000318"/>
    <property type="project" value="GO_Central"/>
</dbReference>
<dbReference type="GO" id="GO:1990674">
    <property type="term" value="C:Golgi cis cisterna membrane"/>
    <property type="evidence" value="ECO:0000250"/>
    <property type="project" value="UniProtKB"/>
</dbReference>
<dbReference type="GO" id="GO:0000139">
    <property type="term" value="C:Golgi membrane"/>
    <property type="evidence" value="ECO:0007669"/>
    <property type="project" value="UniProtKB-SubCell"/>
</dbReference>
<dbReference type="GO" id="GO:0005739">
    <property type="term" value="C:mitochondrion"/>
    <property type="evidence" value="ECO:0000250"/>
    <property type="project" value="UniProtKB"/>
</dbReference>
<dbReference type="GO" id="GO:0033017">
    <property type="term" value="C:sarcoplasmic reticulum membrane"/>
    <property type="evidence" value="ECO:0000250"/>
    <property type="project" value="UniProtKB"/>
</dbReference>
<dbReference type="GO" id="GO:0005385">
    <property type="term" value="F:zinc ion transmembrane transporter activity"/>
    <property type="evidence" value="ECO:0000250"/>
    <property type="project" value="UniProtKB"/>
</dbReference>
<dbReference type="GO" id="GO:0006882">
    <property type="term" value="P:intracellular zinc ion homeostasis"/>
    <property type="evidence" value="ECO:0000318"/>
    <property type="project" value="GO_Central"/>
</dbReference>
<dbReference type="GO" id="GO:1904257">
    <property type="term" value="P:zinc ion import into Golgi lumen"/>
    <property type="evidence" value="ECO:0000250"/>
    <property type="project" value="UniProtKB"/>
</dbReference>
<dbReference type="GO" id="GO:0006829">
    <property type="term" value="P:zinc ion transport"/>
    <property type="evidence" value="ECO:0000250"/>
    <property type="project" value="ZFIN"/>
</dbReference>
<dbReference type="Gene3D" id="1.20.1510.10">
    <property type="entry name" value="Cation efflux protein transmembrane domain"/>
    <property type="match status" value="1"/>
</dbReference>
<dbReference type="InterPro" id="IPR002524">
    <property type="entry name" value="Cation_efflux"/>
</dbReference>
<dbReference type="InterPro" id="IPR027469">
    <property type="entry name" value="Cation_efflux_TMD_sf"/>
</dbReference>
<dbReference type="InterPro" id="IPR045316">
    <property type="entry name" value="Msc2-like"/>
</dbReference>
<dbReference type="NCBIfam" id="TIGR01297">
    <property type="entry name" value="CDF"/>
    <property type="match status" value="1"/>
</dbReference>
<dbReference type="PANTHER" id="PTHR45755">
    <property type="match status" value="1"/>
</dbReference>
<dbReference type="PANTHER" id="PTHR45755:SF4">
    <property type="entry name" value="ZINC TRANSPORTER 7"/>
    <property type="match status" value="1"/>
</dbReference>
<dbReference type="Pfam" id="PF01545">
    <property type="entry name" value="Cation_efflux"/>
    <property type="match status" value="1"/>
</dbReference>
<dbReference type="SUPFAM" id="SSF161111">
    <property type="entry name" value="Cation efflux protein transmembrane domain-like"/>
    <property type="match status" value="1"/>
</dbReference>